<comment type="function">
    <text evidence="1">Catalyzes the dephosphorylation of undecaprenyl diphosphate (UPP). Confers resistance to bacitracin.</text>
</comment>
<comment type="catalytic activity">
    <reaction evidence="1">
        <text>di-trans,octa-cis-undecaprenyl diphosphate + H2O = di-trans,octa-cis-undecaprenyl phosphate + phosphate + H(+)</text>
        <dbReference type="Rhea" id="RHEA:28094"/>
        <dbReference type="ChEBI" id="CHEBI:15377"/>
        <dbReference type="ChEBI" id="CHEBI:15378"/>
        <dbReference type="ChEBI" id="CHEBI:43474"/>
        <dbReference type="ChEBI" id="CHEBI:58405"/>
        <dbReference type="ChEBI" id="CHEBI:60392"/>
        <dbReference type="EC" id="3.6.1.27"/>
    </reaction>
</comment>
<comment type="subcellular location">
    <subcellularLocation>
        <location evidence="1">Cell inner membrane</location>
        <topology evidence="1">Multi-pass membrane protein</topology>
    </subcellularLocation>
</comment>
<comment type="miscellaneous">
    <text>Bacitracin is thought to be involved in the inhibition of peptidoglycan synthesis by sequestering undecaprenyl diphosphate, thereby reducing the pool of lipid carrier available.</text>
</comment>
<comment type="similarity">
    <text evidence="1">Belongs to the UppP family.</text>
</comment>
<accession>Q7NYE7</accession>
<gene>
    <name evidence="1" type="primary">uppP1</name>
    <name type="synonym">bacA1</name>
    <name type="synonym">upk1</name>
    <name type="ordered locus">CV_1327</name>
</gene>
<proteinExistence type="inferred from homology"/>
<organism>
    <name type="scientific">Chromobacterium violaceum (strain ATCC 12472 / DSM 30191 / JCM 1249 / CCUG 213 / NBRC 12614 / NCIMB 9131 / NCTC 9757 / MK)</name>
    <dbReference type="NCBI Taxonomy" id="243365"/>
    <lineage>
        <taxon>Bacteria</taxon>
        <taxon>Pseudomonadati</taxon>
        <taxon>Pseudomonadota</taxon>
        <taxon>Betaproteobacteria</taxon>
        <taxon>Neisseriales</taxon>
        <taxon>Chromobacteriaceae</taxon>
        <taxon>Chromobacterium</taxon>
    </lineage>
</organism>
<dbReference type="EC" id="3.6.1.27" evidence="1"/>
<dbReference type="EMBL" id="AE016825">
    <property type="protein sequence ID" value="AAQ59002.1"/>
    <property type="molecule type" value="Genomic_DNA"/>
</dbReference>
<dbReference type="SMR" id="Q7NYE7"/>
<dbReference type="STRING" id="243365.CV_1327"/>
<dbReference type="KEGG" id="cvi:CV_1327"/>
<dbReference type="eggNOG" id="COG1968">
    <property type="taxonomic scope" value="Bacteria"/>
</dbReference>
<dbReference type="HOGENOM" id="CLU_060296_2_0_4"/>
<dbReference type="Proteomes" id="UP000001424">
    <property type="component" value="Chromosome"/>
</dbReference>
<dbReference type="GO" id="GO:0005886">
    <property type="term" value="C:plasma membrane"/>
    <property type="evidence" value="ECO:0007669"/>
    <property type="project" value="UniProtKB-SubCell"/>
</dbReference>
<dbReference type="GO" id="GO:0050380">
    <property type="term" value="F:undecaprenyl-diphosphatase activity"/>
    <property type="evidence" value="ECO:0007669"/>
    <property type="project" value="UniProtKB-UniRule"/>
</dbReference>
<dbReference type="GO" id="GO:0071555">
    <property type="term" value="P:cell wall organization"/>
    <property type="evidence" value="ECO:0007669"/>
    <property type="project" value="UniProtKB-KW"/>
</dbReference>
<dbReference type="GO" id="GO:0009252">
    <property type="term" value="P:peptidoglycan biosynthetic process"/>
    <property type="evidence" value="ECO:0007669"/>
    <property type="project" value="UniProtKB-KW"/>
</dbReference>
<dbReference type="GO" id="GO:0008360">
    <property type="term" value="P:regulation of cell shape"/>
    <property type="evidence" value="ECO:0007669"/>
    <property type="project" value="UniProtKB-KW"/>
</dbReference>
<dbReference type="GO" id="GO:0046677">
    <property type="term" value="P:response to antibiotic"/>
    <property type="evidence" value="ECO:0007669"/>
    <property type="project" value="UniProtKB-UniRule"/>
</dbReference>
<dbReference type="HAMAP" id="MF_01006">
    <property type="entry name" value="Undec_diphosphatase"/>
    <property type="match status" value="1"/>
</dbReference>
<dbReference type="InterPro" id="IPR003824">
    <property type="entry name" value="UppP"/>
</dbReference>
<dbReference type="NCBIfam" id="NF001389">
    <property type="entry name" value="PRK00281.1-2"/>
    <property type="match status" value="1"/>
</dbReference>
<dbReference type="NCBIfam" id="NF001390">
    <property type="entry name" value="PRK00281.1-4"/>
    <property type="match status" value="1"/>
</dbReference>
<dbReference type="NCBIfam" id="TIGR00753">
    <property type="entry name" value="undec_PP_bacA"/>
    <property type="match status" value="1"/>
</dbReference>
<dbReference type="PANTHER" id="PTHR30622">
    <property type="entry name" value="UNDECAPRENYL-DIPHOSPHATASE"/>
    <property type="match status" value="1"/>
</dbReference>
<dbReference type="PANTHER" id="PTHR30622:SF3">
    <property type="entry name" value="UNDECAPRENYL-DIPHOSPHATASE"/>
    <property type="match status" value="1"/>
</dbReference>
<dbReference type="Pfam" id="PF02673">
    <property type="entry name" value="BacA"/>
    <property type="match status" value="1"/>
</dbReference>
<reference key="1">
    <citation type="journal article" date="2003" name="Proc. Natl. Acad. Sci. U.S.A.">
        <title>The complete genome sequence of Chromobacterium violaceum reveals remarkable and exploitable bacterial adaptability.</title>
        <authorList>
            <person name="Vasconcelos A.T.R."/>
            <person name="de Almeida D.F."/>
            <person name="Hungria M."/>
            <person name="Guimaraes C.T."/>
            <person name="Antonio R.V."/>
            <person name="Almeida F.C."/>
            <person name="de Almeida L.G.P."/>
            <person name="de Almeida R."/>
            <person name="Alves-Gomes J.A."/>
            <person name="Andrade E.M."/>
            <person name="Araripe J."/>
            <person name="de Araujo M.F.F."/>
            <person name="Astolfi-Filho S."/>
            <person name="Azevedo V."/>
            <person name="Baptista A.J."/>
            <person name="Bataus L.A.M."/>
            <person name="Batista J.S."/>
            <person name="Belo A."/>
            <person name="van den Berg C."/>
            <person name="Bogo M."/>
            <person name="Bonatto S."/>
            <person name="Bordignon J."/>
            <person name="Brigido M.M."/>
            <person name="Brito C.A."/>
            <person name="Brocchi M."/>
            <person name="Burity H.A."/>
            <person name="Camargo A.A."/>
            <person name="Cardoso D.D.P."/>
            <person name="Carneiro N.P."/>
            <person name="Carraro D.M."/>
            <person name="Carvalho C.M.B."/>
            <person name="Cascardo J.C.M."/>
            <person name="Cavada B.S."/>
            <person name="Chueire L.M.O."/>
            <person name="Creczynski-Pasa T.B."/>
            <person name="Cunha-Junior N.C."/>
            <person name="Fagundes N."/>
            <person name="Falcao C.L."/>
            <person name="Fantinatti F."/>
            <person name="Farias I.P."/>
            <person name="Felipe M.S.S."/>
            <person name="Ferrari L.P."/>
            <person name="Ferro J.A."/>
            <person name="Ferro M.I.T."/>
            <person name="Franco G.R."/>
            <person name="Freitas N.S.A."/>
            <person name="Furlan L.R."/>
            <person name="Gazzinelli R.T."/>
            <person name="Gomes E.A."/>
            <person name="Goncalves P.R."/>
            <person name="Grangeiro T.B."/>
            <person name="Grattapaglia D."/>
            <person name="Grisard E.C."/>
            <person name="Hanna E.S."/>
            <person name="Jardim S.N."/>
            <person name="Laurino J."/>
            <person name="Leoi L.C.T."/>
            <person name="Lima L.F.A."/>
            <person name="Loureiro M.F."/>
            <person name="Lyra M.C.C.P."/>
            <person name="Madeira H.M.F."/>
            <person name="Manfio G.P."/>
            <person name="Maranhao A.Q."/>
            <person name="Martins W.S."/>
            <person name="di Mauro S.M.Z."/>
            <person name="de Medeiros S.R.B."/>
            <person name="Meissner R.V."/>
            <person name="Moreira M.A.M."/>
            <person name="Nascimento F.F."/>
            <person name="Nicolas M.F."/>
            <person name="Oliveira J.G."/>
            <person name="Oliveira S.C."/>
            <person name="Paixao R.F.C."/>
            <person name="Parente J.A."/>
            <person name="Pedrosa F.O."/>
            <person name="Pena S.D.J."/>
            <person name="Pereira J.O."/>
            <person name="Pereira M."/>
            <person name="Pinto L.S.R.C."/>
            <person name="Pinto L.S."/>
            <person name="Porto J.I.R."/>
            <person name="Potrich D.P."/>
            <person name="Ramalho-Neto C.E."/>
            <person name="Reis A.M.M."/>
            <person name="Rigo L.U."/>
            <person name="Rondinelli E."/>
            <person name="Santos E.B.P."/>
            <person name="Santos F.R."/>
            <person name="Schneider M.P.C."/>
            <person name="Seuanez H.N."/>
            <person name="Silva A.M.R."/>
            <person name="da Silva A.L.C."/>
            <person name="Silva D.W."/>
            <person name="Silva R."/>
            <person name="Simoes I.C."/>
            <person name="Simon D."/>
            <person name="Soares C.M.A."/>
            <person name="Soares R.B.A."/>
            <person name="Souza E.M."/>
            <person name="Souza K.R.L."/>
            <person name="Souza R.C."/>
            <person name="Steffens M.B.R."/>
            <person name="Steindel M."/>
            <person name="Teixeira S.R."/>
            <person name="Urmenyi T."/>
            <person name="Vettore A."/>
            <person name="Wassem R."/>
            <person name="Zaha A."/>
            <person name="Simpson A.J.G."/>
        </authorList>
    </citation>
    <scope>NUCLEOTIDE SEQUENCE [LARGE SCALE GENOMIC DNA]</scope>
    <source>
        <strain>ATCC 12472 / DSM 30191 / JCM 1249 / CCUG 213 / NBRC 12614 / NCIMB 9131 / NCTC 9757 / MK</strain>
    </source>
</reference>
<sequence length="270" mass="29198">MLFHSLIMGLVEGITEFLPISSTGHLILTGDLLGFLDKEKRDVYEIFIQLGAMLAVVWEYRRKIGHTVAGAVRPGGERNLLLGIVIAFIPAAVAGLLFSKQIKAVLFNPVCVAIAFIVGGLIILWAEKREHKVAVETVDDLSLKDALKVGLCQCLALIPGTSRSGATIIGGLFLGLSRKAATEFSFFLGIPTLGAASLYSLIKHRDALSADDIGVFAVGFIASFVFAFLAIRALLRFISTHSFAVFAWYRIAFGLIVLGTWWSGLVNWSA</sequence>
<evidence type="ECO:0000255" key="1">
    <source>
        <dbReference type="HAMAP-Rule" id="MF_01006"/>
    </source>
</evidence>
<keyword id="KW-0046">Antibiotic resistance</keyword>
<keyword id="KW-0997">Cell inner membrane</keyword>
<keyword id="KW-1003">Cell membrane</keyword>
<keyword id="KW-0133">Cell shape</keyword>
<keyword id="KW-0961">Cell wall biogenesis/degradation</keyword>
<keyword id="KW-0378">Hydrolase</keyword>
<keyword id="KW-0472">Membrane</keyword>
<keyword id="KW-0573">Peptidoglycan synthesis</keyword>
<keyword id="KW-1185">Reference proteome</keyword>
<keyword id="KW-0812">Transmembrane</keyword>
<keyword id="KW-1133">Transmembrane helix</keyword>
<protein>
    <recommendedName>
        <fullName evidence="1">Undecaprenyl-diphosphatase 1</fullName>
        <ecNumber evidence="1">3.6.1.27</ecNumber>
    </recommendedName>
    <alternativeName>
        <fullName evidence="1">Bacitracin resistance protein 1</fullName>
    </alternativeName>
    <alternativeName>
        <fullName evidence="1">Undecaprenyl pyrophosphate phosphatase 1</fullName>
    </alternativeName>
</protein>
<name>UPPP1_CHRVO</name>
<feature type="chain" id="PRO_0000151132" description="Undecaprenyl-diphosphatase 1">
    <location>
        <begin position="1"/>
        <end position="270"/>
    </location>
</feature>
<feature type="transmembrane region" description="Helical" evidence="1">
    <location>
        <begin position="79"/>
        <end position="99"/>
    </location>
</feature>
<feature type="transmembrane region" description="Helical" evidence="1">
    <location>
        <begin position="105"/>
        <end position="125"/>
    </location>
</feature>
<feature type="transmembrane region" description="Helical" evidence="1">
    <location>
        <begin position="155"/>
        <end position="175"/>
    </location>
</feature>
<feature type="transmembrane region" description="Helical" evidence="1">
    <location>
        <begin position="182"/>
        <end position="202"/>
    </location>
</feature>
<feature type="transmembrane region" description="Helical" evidence="1">
    <location>
        <begin position="215"/>
        <end position="235"/>
    </location>
</feature>
<feature type="transmembrane region" description="Helical" evidence="1">
    <location>
        <begin position="242"/>
        <end position="262"/>
    </location>
</feature>